<sequence>MNNSKTNQQMNTSMGYPLTVYDECNKFQLIVPTLDANIMLWCIGQLSLLNDSNGCKHLFWQPNDKSNVRILLNNYDYGHLFKYLQCQRKCSVYIGEGTLKKYNLTISTSFDNFLDLTPSEEKESLCREDAHEDPVSPKAGSEEEISPNSTSNVVVSRECLDNFMKQLLKLEESLNKLELEQKVTNKEPNHRISGTIDIPEDRSELVNFFTELKTVKQLEDVFQRYHDYERLSQECDSKTEIASDHSKKETKIEVEPPNERSLQITMDQRDNSLYFQLFNNTNSVLAGNCKLKFTDAGDKPTTQIIDMGPHEIGIKEYKEYRYFPYALDLEAGSTIEIENQYGEVIFLGKYGSSPMINLRPPSRLSAESLQASQEPFYSFQIDTLPELDDSSIISTSISLSYDGDDNEKALTWEEL</sequence>
<comment type="function">
    <text evidence="1">Cargo-receptor protein involved in the cytoplasm to vacuole transport (Cvt) and in autophagy. Recognizes cargo proteins, such as APE4, LAP3, LAP4 and AMS1 and delivers them to the pre-autophagosomal structure for eventual engulfment by the autophagosome and targeting to the vacuole. Involved in the organization of the preautophagosomal structure (PAS). ATG19 association with cargo protein is required to localize ATG11 to the PAS. Also involved in endoplasmic reticulum-specific autophagic process, in selective removal of ER-associated degradation (ERAD) substrates, and is essential for the survival of cells subjected to severe ER stress. Also plays a role in regulation of filamentous growth (By similarity).</text>
</comment>
<comment type="subunit">
    <text evidence="1">Interacts with the vacuolar aminopeptidase 1 (LAP4) precursor and mature forms. Also interacts with AMS1, APE4, ATG8 ATG11, and UBP3.</text>
</comment>
<comment type="subcellular location">
    <subcellularLocation>
        <location evidence="1">Preautophagosomal structure membrane</location>
        <topology evidence="1">Peripheral membrane protein</topology>
    </subcellularLocation>
    <text evidence="1">Also found in other perivacuolar punctate structures.</text>
</comment>
<comment type="domain">
    <text evidence="1">The coiled coil domain is required for the interaction with LAP4.</text>
</comment>
<comment type="domain">
    <text evidence="1">The C-terminal WXXL motif is crucial for ATG8-binding and Cvt pathway.</text>
</comment>
<comment type="PTM">
    <text evidence="1">Polyubiquitinated at Lys-213 and Lys-216. Deubiquitination by UBP3 is required for full activity of ATG19.</text>
</comment>
<gene>
    <name type="primary">ATG19</name>
    <name type="synonym">CVT19</name>
    <name type="ORF">SCY_4996</name>
</gene>
<dbReference type="EMBL" id="AAFW02000030">
    <property type="protein sequence ID" value="EDN63793.1"/>
    <property type="molecule type" value="Genomic_DNA"/>
</dbReference>
<dbReference type="BMRB" id="A6ZNC8"/>
<dbReference type="SMR" id="A6ZNC8"/>
<dbReference type="HOGENOM" id="CLU_055007_0_0_1"/>
<dbReference type="Proteomes" id="UP000007060">
    <property type="component" value="Unassembled WGS sequence"/>
</dbReference>
<dbReference type="GO" id="GO:0034045">
    <property type="term" value="C:phagophore assembly site membrane"/>
    <property type="evidence" value="ECO:0007669"/>
    <property type="project" value="UniProtKB-SubCell"/>
</dbReference>
<dbReference type="GO" id="GO:0006914">
    <property type="term" value="P:autophagy"/>
    <property type="evidence" value="ECO:0007669"/>
    <property type="project" value="UniProtKB-KW"/>
</dbReference>
<dbReference type="GO" id="GO:0015031">
    <property type="term" value="P:protein transport"/>
    <property type="evidence" value="ECO:0007669"/>
    <property type="project" value="UniProtKB-KW"/>
</dbReference>
<dbReference type="CDD" id="cd12213">
    <property type="entry name" value="ABD"/>
    <property type="match status" value="1"/>
</dbReference>
<dbReference type="Gene3D" id="2.60.40.2830">
    <property type="match status" value="1"/>
</dbReference>
<dbReference type="InterPro" id="IPR024543">
    <property type="entry name" value="Atg19/Atg34_C"/>
</dbReference>
<dbReference type="Pfam" id="PF12744">
    <property type="entry name" value="ATG19"/>
    <property type="match status" value="1"/>
</dbReference>
<proteinExistence type="inferred from homology"/>
<evidence type="ECO:0000250" key="1"/>
<evidence type="ECO:0000250" key="2">
    <source>
        <dbReference type="UniProtKB" id="P35193"/>
    </source>
</evidence>
<evidence type="ECO:0000255" key="3"/>
<evidence type="ECO:0000256" key="4">
    <source>
        <dbReference type="SAM" id="MobiDB-lite"/>
    </source>
</evidence>
<accession>A6ZNC8</accession>
<feature type="chain" id="PRO_0000317991" description="Autophagy-related protein 19">
    <location>
        <begin position="1"/>
        <end position="415"/>
    </location>
</feature>
<feature type="region of interest" description="ATG11-binding" evidence="1">
    <location>
        <begin position="21"/>
        <end position="28"/>
    </location>
</feature>
<feature type="region of interest" description="Disordered" evidence="4">
    <location>
        <begin position="126"/>
        <end position="150"/>
    </location>
</feature>
<feature type="region of interest" description="AMS1-binding" evidence="1">
    <location>
        <begin position="254"/>
        <end position="367"/>
    </location>
</feature>
<feature type="region of interest" description="ATG8-binding" evidence="1">
    <location>
        <begin position="406"/>
        <end position="415"/>
    </location>
</feature>
<feature type="coiled-coil region" evidence="3">
    <location>
        <begin position="157"/>
        <end position="187"/>
    </location>
</feature>
<feature type="short sequence motif" description="WXXL">
    <location>
        <begin position="412"/>
        <end position="415"/>
    </location>
</feature>
<feature type="compositionally biased region" description="Basic and acidic residues" evidence="4">
    <location>
        <begin position="126"/>
        <end position="135"/>
    </location>
</feature>
<feature type="modified residue" description="Phosphoserine" evidence="2">
    <location>
        <position position="136"/>
    </location>
</feature>
<feature type="modified residue" description="Phosphoserine" evidence="2">
    <location>
        <position position="141"/>
    </location>
</feature>
<feature type="modified residue" description="Phosphoserine" evidence="2">
    <location>
        <position position="243"/>
    </location>
</feature>
<feature type="cross-link" description="Glycyl lysine isopeptide (Lys-Gly) (interchain with G-Cter in ubiquitin)" evidence="2">
    <location>
        <position position="213"/>
    </location>
</feature>
<feature type="cross-link" description="Glycyl lysine isopeptide (Lys-Gly) (interchain with G-Cter in ubiquitin)" evidence="2">
    <location>
        <position position="216"/>
    </location>
</feature>
<protein>
    <recommendedName>
        <fullName>Autophagy-related protein 19</fullName>
    </recommendedName>
    <alternativeName>
        <fullName>Cytoplasm-to-vacuole targeting protein 19</fullName>
    </alternativeName>
</protein>
<organism>
    <name type="scientific">Saccharomyces cerevisiae (strain YJM789)</name>
    <name type="common">Baker's yeast</name>
    <dbReference type="NCBI Taxonomy" id="307796"/>
    <lineage>
        <taxon>Eukaryota</taxon>
        <taxon>Fungi</taxon>
        <taxon>Dikarya</taxon>
        <taxon>Ascomycota</taxon>
        <taxon>Saccharomycotina</taxon>
        <taxon>Saccharomycetes</taxon>
        <taxon>Saccharomycetales</taxon>
        <taxon>Saccharomycetaceae</taxon>
        <taxon>Saccharomyces</taxon>
    </lineage>
</organism>
<name>ATG19_YEAS7</name>
<keyword id="KW-0072">Autophagy</keyword>
<keyword id="KW-0175">Coiled coil</keyword>
<keyword id="KW-1017">Isopeptide bond</keyword>
<keyword id="KW-0472">Membrane</keyword>
<keyword id="KW-0597">Phosphoprotein</keyword>
<keyword id="KW-0653">Protein transport</keyword>
<keyword id="KW-0813">Transport</keyword>
<keyword id="KW-0832">Ubl conjugation</keyword>
<reference key="1">
    <citation type="journal article" date="2007" name="Proc. Natl. Acad. Sci. U.S.A.">
        <title>Genome sequencing and comparative analysis of Saccharomyces cerevisiae strain YJM789.</title>
        <authorList>
            <person name="Wei W."/>
            <person name="McCusker J.H."/>
            <person name="Hyman R.W."/>
            <person name="Jones T."/>
            <person name="Ning Y."/>
            <person name="Cao Z."/>
            <person name="Gu Z."/>
            <person name="Bruno D."/>
            <person name="Miranda M."/>
            <person name="Nguyen M."/>
            <person name="Wilhelmy J."/>
            <person name="Komp C."/>
            <person name="Tamse R."/>
            <person name="Wang X."/>
            <person name="Jia P."/>
            <person name="Luedi P."/>
            <person name="Oefner P.J."/>
            <person name="David L."/>
            <person name="Dietrich F.S."/>
            <person name="Li Y."/>
            <person name="Davis R.W."/>
            <person name="Steinmetz L.M."/>
        </authorList>
    </citation>
    <scope>NUCLEOTIDE SEQUENCE [LARGE SCALE GENOMIC DNA]</scope>
    <source>
        <strain>YJM789</strain>
    </source>
</reference>